<gene>
    <name type="primary">MTN1</name>
    <name type="synonym">MTAN</name>
    <name type="synonym">MTAN1</name>
    <name type="ordered locus">At4g38800</name>
    <name type="ORF">T9A14.80</name>
</gene>
<name>MTN1_ARATH</name>
<sequence>MAPHGDGLSDIEEPEVDAQSEILRPISSVVFVIAMQAEALPLVNKFGLSETTDSPLGKGLPWVLYHGVHKDLRINVVCPGRDAALGIDSVGTVPASLITFASIQALKPDIIINAGTCGGFKVKGANIGDVFLVSDVVFHDRRIPIPMFDLYGVGLRQAFSTPNLLKELNLKIGRLSTGDSLDMSTQDETLIIANDATLKDMEGAAVAYVADLLKIPVVFLKAVTDLVDGDKPTAEEFLQNLTVVTAALEGTATKVINFINGRNLSDL</sequence>
<dbReference type="EC" id="3.2.2.16" evidence="3 5"/>
<dbReference type="EMBL" id="AL035656">
    <property type="protein sequence ID" value="CAB38614.1"/>
    <property type="molecule type" value="Genomic_DNA"/>
</dbReference>
<dbReference type="EMBL" id="AL161594">
    <property type="protein sequence ID" value="CAB80543.1"/>
    <property type="molecule type" value="Genomic_DNA"/>
</dbReference>
<dbReference type="EMBL" id="CP002687">
    <property type="protein sequence ID" value="AEE86976.1"/>
    <property type="molecule type" value="Genomic_DNA"/>
</dbReference>
<dbReference type="EMBL" id="AF370297">
    <property type="protein sequence ID" value="AAK44112.1"/>
    <property type="molecule type" value="mRNA"/>
</dbReference>
<dbReference type="EMBL" id="AY142681">
    <property type="protein sequence ID" value="AAN13219.1"/>
    <property type="molecule type" value="mRNA"/>
</dbReference>
<dbReference type="PIR" id="T06079">
    <property type="entry name" value="T06079"/>
</dbReference>
<dbReference type="RefSeq" id="NP_195591.1">
    <property type="nucleotide sequence ID" value="NM_120040.4"/>
</dbReference>
<dbReference type="PDB" id="2H8G">
    <property type="method" value="X-ray"/>
    <property type="resolution" value="1.50 A"/>
    <property type="chains" value="A/B=1-267"/>
</dbReference>
<dbReference type="PDB" id="2QSU">
    <property type="method" value="X-ray"/>
    <property type="resolution" value="2.00 A"/>
    <property type="chains" value="A/B=1-267"/>
</dbReference>
<dbReference type="PDB" id="2QTG">
    <property type="method" value="X-ray"/>
    <property type="resolution" value="1.84 A"/>
    <property type="chains" value="A/B=1-267"/>
</dbReference>
<dbReference type="PDB" id="2QTT">
    <property type="method" value="X-ray"/>
    <property type="resolution" value="1.93 A"/>
    <property type="chains" value="A/B=1-267"/>
</dbReference>
<dbReference type="PDB" id="3LGS">
    <property type="method" value="X-ray"/>
    <property type="resolution" value="2.20 A"/>
    <property type="chains" value="A/B/C/D=1-267"/>
</dbReference>
<dbReference type="PDBsum" id="2H8G"/>
<dbReference type="PDBsum" id="2QSU"/>
<dbReference type="PDBsum" id="2QTG"/>
<dbReference type="PDBsum" id="2QTT"/>
<dbReference type="PDBsum" id="3LGS"/>
<dbReference type="SMR" id="Q9T0I8"/>
<dbReference type="BioGRID" id="15315">
    <property type="interactions" value="5"/>
</dbReference>
<dbReference type="FunCoup" id="Q9T0I8">
    <property type="interactions" value="528"/>
</dbReference>
<dbReference type="IntAct" id="Q9T0I8">
    <property type="interactions" value="2"/>
</dbReference>
<dbReference type="STRING" id="3702.Q9T0I8"/>
<dbReference type="iPTMnet" id="Q9T0I8"/>
<dbReference type="PaxDb" id="3702-AT4G38800.1"/>
<dbReference type="ProteomicsDB" id="250984"/>
<dbReference type="EnsemblPlants" id="AT4G38800.1">
    <property type="protein sequence ID" value="AT4G38800.1"/>
    <property type="gene ID" value="AT4G38800"/>
</dbReference>
<dbReference type="GeneID" id="830035"/>
<dbReference type="Gramene" id="AT4G38800.1">
    <property type="protein sequence ID" value="AT4G38800.1"/>
    <property type="gene ID" value="AT4G38800"/>
</dbReference>
<dbReference type="KEGG" id="ath:AT4G38800"/>
<dbReference type="Araport" id="AT4G38800"/>
<dbReference type="TAIR" id="AT4G38800">
    <property type="gene designation" value="MTN1"/>
</dbReference>
<dbReference type="eggNOG" id="ENOG502QTZK">
    <property type="taxonomic scope" value="Eukaryota"/>
</dbReference>
<dbReference type="HOGENOM" id="CLU_067435_0_0_1"/>
<dbReference type="InParanoid" id="Q9T0I8"/>
<dbReference type="OMA" id="FKDKGAC"/>
<dbReference type="PhylomeDB" id="Q9T0I8"/>
<dbReference type="BioCyc" id="ARA:AT4G38800-MONOMER"/>
<dbReference type="BRENDA" id="2.4.2.28">
    <property type="organism ID" value="399"/>
</dbReference>
<dbReference type="BRENDA" id="3.2.2.9">
    <property type="organism ID" value="399"/>
</dbReference>
<dbReference type="UniPathway" id="UPA00904">
    <property type="reaction ID" value="UER00871"/>
</dbReference>
<dbReference type="EvolutionaryTrace" id="Q9T0I8"/>
<dbReference type="PRO" id="PR:Q9T0I8"/>
<dbReference type="Proteomes" id="UP000006548">
    <property type="component" value="Chromosome 4"/>
</dbReference>
<dbReference type="ExpressionAtlas" id="Q9T0I8">
    <property type="expression patterns" value="baseline and differential"/>
</dbReference>
<dbReference type="GO" id="GO:0005829">
    <property type="term" value="C:cytosol"/>
    <property type="evidence" value="ECO:0007005"/>
    <property type="project" value="TAIR"/>
</dbReference>
<dbReference type="GO" id="GO:0005886">
    <property type="term" value="C:plasma membrane"/>
    <property type="evidence" value="ECO:0007005"/>
    <property type="project" value="TAIR"/>
</dbReference>
<dbReference type="GO" id="GO:0008930">
    <property type="term" value="F:methylthioadenosine nucleosidase activity"/>
    <property type="evidence" value="ECO:0000314"/>
    <property type="project" value="TAIR"/>
</dbReference>
<dbReference type="GO" id="GO:0019509">
    <property type="term" value="P:L-methionine salvage from methylthioadenosine"/>
    <property type="evidence" value="ECO:0000314"/>
    <property type="project" value="TAIR"/>
</dbReference>
<dbReference type="GO" id="GO:0009116">
    <property type="term" value="P:nucleoside metabolic process"/>
    <property type="evidence" value="ECO:0007669"/>
    <property type="project" value="InterPro"/>
</dbReference>
<dbReference type="GO" id="GO:0010087">
    <property type="term" value="P:phloem or xylem histogenesis"/>
    <property type="evidence" value="ECO:0000316"/>
    <property type="project" value="TAIR"/>
</dbReference>
<dbReference type="CDD" id="cd09008">
    <property type="entry name" value="MTAN"/>
    <property type="match status" value="1"/>
</dbReference>
<dbReference type="FunFam" id="3.40.50.1580:FF:000015">
    <property type="entry name" value="MTN2"/>
    <property type="match status" value="1"/>
</dbReference>
<dbReference type="Gene3D" id="3.40.50.1580">
    <property type="entry name" value="Nucleoside phosphorylase domain"/>
    <property type="match status" value="1"/>
</dbReference>
<dbReference type="InterPro" id="IPR044580">
    <property type="entry name" value="MTAN"/>
</dbReference>
<dbReference type="InterPro" id="IPR000845">
    <property type="entry name" value="Nucleoside_phosphorylase_d"/>
</dbReference>
<dbReference type="InterPro" id="IPR035994">
    <property type="entry name" value="Nucleoside_phosphorylase_sf"/>
</dbReference>
<dbReference type="PANTHER" id="PTHR46994:SF1">
    <property type="entry name" value="5'-METHYLTHIOADENOSINE NUCLEOSIDASE"/>
    <property type="match status" value="1"/>
</dbReference>
<dbReference type="PANTHER" id="PTHR46994">
    <property type="entry name" value="5'-METHYLTHIOADENOSINE/S-ADENOSYLHOMOCYSTEINE NUCLEOSIDASE 1"/>
    <property type="match status" value="1"/>
</dbReference>
<dbReference type="Pfam" id="PF01048">
    <property type="entry name" value="PNP_UDP_1"/>
    <property type="match status" value="1"/>
</dbReference>
<dbReference type="SUPFAM" id="SSF53167">
    <property type="entry name" value="Purine and uridine phosphorylases"/>
    <property type="match status" value="1"/>
</dbReference>
<comment type="function">
    <text evidence="2 3 5 6">Enzyme of the methionine cycle that catalyzes the irreversible cleavage of the glycosidic bond in 5'-methylthioadenosine (MTA) to adenine and 5'-methylthioribose (PubMed:18342331, PubMed:19249293). Contributes to the maintenance of AdoMet homeostasis and is required to sustain high rates of ethylene synthesis. Inactive towards S-adenosylhomocysteine (SAH/AdoHcy) (PubMed:18342331, PubMed:19249293).</text>
</comment>
<comment type="catalytic activity">
    <reaction evidence="3 5">
        <text>S-methyl-5'-thioadenosine + H2O = 5-(methylsulfanyl)-D-ribose + adenine</text>
        <dbReference type="Rhea" id="RHEA:13617"/>
        <dbReference type="ChEBI" id="CHEBI:15377"/>
        <dbReference type="ChEBI" id="CHEBI:16708"/>
        <dbReference type="ChEBI" id="CHEBI:17509"/>
        <dbReference type="ChEBI" id="CHEBI:78440"/>
        <dbReference type="EC" id="3.2.2.16"/>
    </reaction>
    <physiologicalReaction direction="left-to-right" evidence="10 11">
        <dbReference type="Rhea" id="RHEA:13618"/>
    </physiologicalReaction>
</comment>
<comment type="activity regulation">
    <text evidence="3 4">Inhibited by CBL3 in a calcium-dependent manner (PubMed:18945934). Inhibited by 5'-methylthiotubercidin (MTT) and by formycin A (FMA) (PubMed:18342331).</text>
</comment>
<comment type="biophysicochemical properties">
    <kinetics>
        <KM evidence="3">7.1 uM for 5'-methylthioadenosine (MTA)</KM>
        <KM evidence="5">27.6 uM for 5'-methylthioadenosine (MTA)</KM>
        <text evidence="3">kcat is 18.7 sec(-1).</text>
    </kinetics>
    <phDependence>
        <text evidence="3">Optimum pH is 8.0.</text>
    </phDependence>
</comment>
<comment type="pathway">
    <text>Amino-acid biosynthesis; L-methionine biosynthesis via salvage pathway; S-methyl-5-thio-alpha-D-ribose 1-phosphate from S-methyl-5'-thioadenosine (hydrolase route): step 1/2.</text>
</comment>
<comment type="subunit">
    <text evidence="1 3 4 5 7">Homodimer (PubMed:16909418, PubMed:19249293). Interacts with CBL3 in a calcium-dependent manner.</text>
</comment>
<comment type="tissue specificity">
    <text evidence="4">Expressed in roots, leaves, stems, cauline leaves and flowers.</text>
</comment>
<comment type="disruption phenotype">
    <text evidence="6">No visible phenotype under normal growth condition. Not able to grow with methylthioadenosine (MTA) as unique source of sulfur.</text>
</comment>
<comment type="similarity">
    <text evidence="9">Belongs to the PNP/UDP phosphorylase family. MtnN subfamily.</text>
</comment>
<proteinExistence type="evidence at protein level"/>
<feature type="chain" id="PRO_0000401373" description="5'-methylthioadenosine nucleosidase">
    <location>
        <begin position="1"/>
        <end position="267"/>
    </location>
</feature>
<feature type="active site" description="Proton acceptor" evidence="12">
    <location>
        <position position="38"/>
    </location>
</feature>
<feature type="active site" description="Proton donor" evidence="12">
    <location>
        <position position="225"/>
    </location>
</feature>
<feature type="binding site" evidence="10 12 16 17">
    <location>
        <position position="116"/>
    </location>
    <ligand>
        <name>S-methyl-5'-thioadenosine</name>
        <dbReference type="ChEBI" id="CHEBI:17509"/>
    </ligand>
</feature>
<feature type="binding site" evidence="10 12 16 17">
    <location>
        <begin position="199"/>
        <end position="202"/>
    </location>
    <ligand>
        <name>S-methyl-5'-thioadenosine</name>
        <dbReference type="ChEBI" id="CHEBI:17509"/>
    </ligand>
</feature>
<feature type="binding site" evidence="1 7 13 17">
    <location>
        <position position="199"/>
    </location>
    <ligand>
        <name>adenine</name>
        <dbReference type="ChEBI" id="CHEBI:16708"/>
    </ligand>
</feature>
<feature type="binding site" evidence="1 3 12 13 16 17">
    <location>
        <position position="225"/>
    </location>
    <ligand>
        <name>adenine</name>
        <dbReference type="ChEBI" id="CHEBI:16708"/>
    </ligand>
</feature>
<feature type="binding site" evidence="10 12 16 17">
    <location>
        <position position="225"/>
    </location>
    <ligand>
        <name>S-methyl-5'-thioadenosine</name>
        <dbReference type="ChEBI" id="CHEBI:17509"/>
    </ligand>
</feature>
<feature type="strand" evidence="18">
    <location>
        <begin position="28"/>
        <end position="32"/>
    </location>
</feature>
<feature type="helix" evidence="18">
    <location>
        <begin position="36"/>
        <end position="45"/>
    </location>
</feature>
<feature type="strand" evidence="18">
    <location>
        <begin position="63"/>
        <end position="69"/>
    </location>
</feature>
<feature type="strand" evidence="18">
    <location>
        <begin position="72"/>
        <end position="78"/>
    </location>
</feature>
<feature type="turn" evidence="18">
    <location>
        <begin position="83"/>
        <end position="85"/>
    </location>
</feature>
<feature type="strand" evidence="19">
    <location>
        <begin position="86"/>
        <end position="88"/>
    </location>
</feature>
<feature type="helix" evidence="18">
    <location>
        <begin position="92"/>
        <end position="106"/>
    </location>
</feature>
<feature type="strand" evidence="18">
    <location>
        <begin position="109"/>
        <end position="119"/>
    </location>
</feature>
<feature type="helix" evidence="18">
    <location>
        <begin position="121"/>
        <end position="123"/>
    </location>
</feature>
<feature type="strand" evidence="18">
    <location>
        <begin position="130"/>
        <end position="140"/>
    </location>
</feature>
<feature type="helix" evidence="18">
    <location>
        <begin position="148"/>
        <end position="153"/>
    </location>
</feature>
<feature type="helix" evidence="18">
    <location>
        <begin position="162"/>
        <end position="168"/>
    </location>
</feature>
<feature type="strand" evidence="18">
    <location>
        <begin position="171"/>
        <end position="177"/>
    </location>
</feature>
<feature type="helix" evidence="18">
    <location>
        <begin position="185"/>
        <end position="193"/>
    </location>
</feature>
<feature type="strand" evidence="18">
    <location>
        <begin position="197"/>
        <end position="202"/>
    </location>
</feature>
<feature type="helix" evidence="18">
    <location>
        <begin position="203"/>
        <end position="212"/>
    </location>
</feature>
<feature type="strand" evidence="18">
    <location>
        <begin position="217"/>
        <end position="226"/>
    </location>
</feature>
<feature type="strand" evidence="18">
    <location>
        <begin position="229"/>
        <end position="231"/>
    </location>
</feature>
<feature type="helix" evidence="18">
    <location>
        <begin position="233"/>
        <end position="259"/>
    </location>
</feature>
<feature type="helix" evidence="18">
    <location>
        <begin position="264"/>
        <end position="266"/>
    </location>
</feature>
<accession>Q9T0I8</accession>
<protein>
    <recommendedName>
        <fullName>5'-methylthioadenosine nucleosidase</fullName>
        <shortName>MTA nucleosidase</shortName>
        <ecNumber evidence="3 5">3.2.2.16</ecNumber>
    </recommendedName>
    <alternativeName>
        <fullName>5'-methylthioadenosine nucleosidase 1</fullName>
        <shortName evidence="8">AtMTAN1</shortName>
        <shortName>MTA nucleosidase 1</shortName>
    </alternativeName>
</protein>
<organism>
    <name type="scientific">Arabidopsis thaliana</name>
    <name type="common">Mouse-ear cress</name>
    <dbReference type="NCBI Taxonomy" id="3702"/>
    <lineage>
        <taxon>Eukaryota</taxon>
        <taxon>Viridiplantae</taxon>
        <taxon>Streptophyta</taxon>
        <taxon>Embryophyta</taxon>
        <taxon>Tracheophyta</taxon>
        <taxon>Spermatophyta</taxon>
        <taxon>Magnoliopsida</taxon>
        <taxon>eudicotyledons</taxon>
        <taxon>Gunneridae</taxon>
        <taxon>Pentapetalae</taxon>
        <taxon>rosids</taxon>
        <taxon>malvids</taxon>
        <taxon>Brassicales</taxon>
        <taxon>Brassicaceae</taxon>
        <taxon>Camelineae</taxon>
        <taxon>Arabidopsis</taxon>
    </lineage>
</organism>
<keyword id="KW-0002">3D-structure</keyword>
<keyword id="KW-0028">Amino-acid biosynthesis</keyword>
<keyword id="KW-0378">Hydrolase</keyword>
<keyword id="KW-0486">Methionine biosynthesis</keyword>
<keyword id="KW-1185">Reference proteome</keyword>
<reference key="1">
    <citation type="journal article" date="1999" name="Nature">
        <title>Sequence and analysis of chromosome 4 of the plant Arabidopsis thaliana.</title>
        <authorList>
            <person name="Mayer K.F.X."/>
            <person name="Schueller C."/>
            <person name="Wambutt R."/>
            <person name="Murphy G."/>
            <person name="Volckaert G."/>
            <person name="Pohl T."/>
            <person name="Duesterhoeft A."/>
            <person name="Stiekema W."/>
            <person name="Entian K.-D."/>
            <person name="Terryn N."/>
            <person name="Harris B."/>
            <person name="Ansorge W."/>
            <person name="Brandt P."/>
            <person name="Grivell L.A."/>
            <person name="Rieger M."/>
            <person name="Weichselgartner M."/>
            <person name="de Simone V."/>
            <person name="Obermaier B."/>
            <person name="Mache R."/>
            <person name="Mueller M."/>
            <person name="Kreis M."/>
            <person name="Delseny M."/>
            <person name="Puigdomenech P."/>
            <person name="Watson M."/>
            <person name="Schmidtheini T."/>
            <person name="Reichert B."/>
            <person name="Portetelle D."/>
            <person name="Perez-Alonso M."/>
            <person name="Boutry M."/>
            <person name="Bancroft I."/>
            <person name="Vos P."/>
            <person name="Hoheisel J."/>
            <person name="Zimmermann W."/>
            <person name="Wedler H."/>
            <person name="Ridley P."/>
            <person name="Langham S.-A."/>
            <person name="McCullagh B."/>
            <person name="Bilham L."/>
            <person name="Robben J."/>
            <person name="van der Schueren J."/>
            <person name="Grymonprez B."/>
            <person name="Chuang Y.-J."/>
            <person name="Vandenbussche F."/>
            <person name="Braeken M."/>
            <person name="Weltjens I."/>
            <person name="Voet M."/>
            <person name="Bastiaens I."/>
            <person name="Aert R."/>
            <person name="Defoor E."/>
            <person name="Weitzenegger T."/>
            <person name="Bothe G."/>
            <person name="Ramsperger U."/>
            <person name="Hilbert H."/>
            <person name="Braun M."/>
            <person name="Holzer E."/>
            <person name="Brandt A."/>
            <person name="Peters S."/>
            <person name="van Staveren M."/>
            <person name="Dirkse W."/>
            <person name="Mooijman P."/>
            <person name="Klein Lankhorst R."/>
            <person name="Rose M."/>
            <person name="Hauf J."/>
            <person name="Koetter P."/>
            <person name="Berneiser S."/>
            <person name="Hempel S."/>
            <person name="Feldpausch M."/>
            <person name="Lamberth S."/>
            <person name="Van den Daele H."/>
            <person name="De Keyser A."/>
            <person name="Buysshaert C."/>
            <person name="Gielen J."/>
            <person name="Villarroel R."/>
            <person name="De Clercq R."/>
            <person name="van Montagu M."/>
            <person name="Rogers J."/>
            <person name="Cronin A."/>
            <person name="Quail M.A."/>
            <person name="Bray-Allen S."/>
            <person name="Clark L."/>
            <person name="Doggett J."/>
            <person name="Hall S."/>
            <person name="Kay M."/>
            <person name="Lennard N."/>
            <person name="McLay K."/>
            <person name="Mayes R."/>
            <person name="Pettett A."/>
            <person name="Rajandream M.A."/>
            <person name="Lyne M."/>
            <person name="Benes V."/>
            <person name="Rechmann S."/>
            <person name="Borkova D."/>
            <person name="Bloecker H."/>
            <person name="Scharfe M."/>
            <person name="Grimm M."/>
            <person name="Loehnert T.-H."/>
            <person name="Dose S."/>
            <person name="de Haan M."/>
            <person name="Maarse A.C."/>
            <person name="Schaefer M."/>
            <person name="Mueller-Auer S."/>
            <person name="Gabel C."/>
            <person name="Fuchs M."/>
            <person name="Fartmann B."/>
            <person name="Granderath K."/>
            <person name="Dauner D."/>
            <person name="Herzl A."/>
            <person name="Neumann S."/>
            <person name="Argiriou A."/>
            <person name="Vitale D."/>
            <person name="Liguori R."/>
            <person name="Piravandi E."/>
            <person name="Massenet O."/>
            <person name="Quigley F."/>
            <person name="Clabauld G."/>
            <person name="Muendlein A."/>
            <person name="Felber R."/>
            <person name="Schnabl S."/>
            <person name="Hiller R."/>
            <person name="Schmidt W."/>
            <person name="Lecharny A."/>
            <person name="Aubourg S."/>
            <person name="Chefdor F."/>
            <person name="Cooke R."/>
            <person name="Berger C."/>
            <person name="Monfort A."/>
            <person name="Casacuberta E."/>
            <person name="Gibbons T."/>
            <person name="Weber N."/>
            <person name="Vandenbol M."/>
            <person name="Bargues M."/>
            <person name="Terol J."/>
            <person name="Torres A."/>
            <person name="Perez-Perez A."/>
            <person name="Purnelle B."/>
            <person name="Bent E."/>
            <person name="Johnson S."/>
            <person name="Tacon D."/>
            <person name="Jesse T."/>
            <person name="Heijnen L."/>
            <person name="Schwarz S."/>
            <person name="Scholler P."/>
            <person name="Heber S."/>
            <person name="Francs P."/>
            <person name="Bielke C."/>
            <person name="Frishman D."/>
            <person name="Haase D."/>
            <person name="Lemcke K."/>
            <person name="Mewes H.-W."/>
            <person name="Stocker S."/>
            <person name="Zaccaria P."/>
            <person name="Bevan M."/>
            <person name="Wilson R.K."/>
            <person name="de la Bastide M."/>
            <person name="Habermann K."/>
            <person name="Parnell L."/>
            <person name="Dedhia N."/>
            <person name="Gnoj L."/>
            <person name="Schutz K."/>
            <person name="Huang E."/>
            <person name="Spiegel L."/>
            <person name="Sekhon M."/>
            <person name="Murray J."/>
            <person name="Sheet P."/>
            <person name="Cordes M."/>
            <person name="Abu-Threideh J."/>
            <person name="Stoneking T."/>
            <person name="Kalicki J."/>
            <person name="Graves T."/>
            <person name="Harmon G."/>
            <person name="Edwards J."/>
            <person name="Latreille P."/>
            <person name="Courtney L."/>
            <person name="Cloud J."/>
            <person name="Abbott A."/>
            <person name="Scott K."/>
            <person name="Johnson D."/>
            <person name="Minx P."/>
            <person name="Bentley D."/>
            <person name="Fulton B."/>
            <person name="Miller N."/>
            <person name="Greco T."/>
            <person name="Kemp K."/>
            <person name="Kramer J."/>
            <person name="Fulton L."/>
            <person name="Mardis E."/>
            <person name="Dante M."/>
            <person name="Pepin K."/>
            <person name="Hillier L.W."/>
            <person name="Nelson J."/>
            <person name="Spieth J."/>
            <person name="Ryan E."/>
            <person name="Andrews S."/>
            <person name="Geisel C."/>
            <person name="Layman D."/>
            <person name="Du H."/>
            <person name="Ali J."/>
            <person name="Berghoff A."/>
            <person name="Jones K."/>
            <person name="Drone K."/>
            <person name="Cotton M."/>
            <person name="Joshu C."/>
            <person name="Antonoiu B."/>
            <person name="Zidanic M."/>
            <person name="Strong C."/>
            <person name="Sun H."/>
            <person name="Lamar B."/>
            <person name="Yordan C."/>
            <person name="Ma P."/>
            <person name="Zhong J."/>
            <person name="Preston R."/>
            <person name="Vil D."/>
            <person name="Shekher M."/>
            <person name="Matero A."/>
            <person name="Shah R."/>
            <person name="Swaby I.K."/>
            <person name="O'Shaughnessy A."/>
            <person name="Rodriguez M."/>
            <person name="Hoffman J."/>
            <person name="Till S."/>
            <person name="Granat S."/>
            <person name="Shohdy N."/>
            <person name="Hasegawa A."/>
            <person name="Hameed A."/>
            <person name="Lodhi M."/>
            <person name="Johnson A."/>
            <person name="Chen E."/>
            <person name="Marra M.A."/>
            <person name="Martienssen R."/>
            <person name="McCombie W.R."/>
        </authorList>
    </citation>
    <scope>NUCLEOTIDE SEQUENCE [LARGE SCALE GENOMIC DNA]</scope>
    <source>
        <strain>cv. Columbia</strain>
    </source>
</reference>
<reference key="2">
    <citation type="journal article" date="2017" name="Plant J.">
        <title>Araport11: a complete reannotation of the Arabidopsis thaliana reference genome.</title>
        <authorList>
            <person name="Cheng C.Y."/>
            <person name="Krishnakumar V."/>
            <person name="Chan A.P."/>
            <person name="Thibaud-Nissen F."/>
            <person name="Schobel S."/>
            <person name="Town C.D."/>
        </authorList>
    </citation>
    <scope>GENOME REANNOTATION</scope>
    <source>
        <strain>cv. Columbia</strain>
    </source>
</reference>
<reference key="3">
    <citation type="journal article" date="2003" name="Science">
        <title>Empirical analysis of transcriptional activity in the Arabidopsis genome.</title>
        <authorList>
            <person name="Yamada K."/>
            <person name="Lim J."/>
            <person name="Dale J.M."/>
            <person name="Chen H."/>
            <person name="Shinn P."/>
            <person name="Palm C.J."/>
            <person name="Southwick A.M."/>
            <person name="Wu H.C."/>
            <person name="Kim C.J."/>
            <person name="Nguyen M."/>
            <person name="Pham P.K."/>
            <person name="Cheuk R.F."/>
            <person name="Karlin-Newmann G."/>
            <person name="Liu S.X."/>
            <person name="Lam B."/>
            <person name="Sakano H."/>
            <person name="Wu T."/>
            <person name="Yu G."/>
            <person name="Miranda M."/>
            <person name="Quach H.L."/>
            <person name="Tripp M."/>
            <person name="Chang C.H."/>
            <person name="Lee J.M."/>
            <person name="Toriumi M.J."/>
            <person name="Chan M.M."/>
            <person name="Tang C.C."/>
            <person name="Onodera C.S."/>
            <person name="Deng J.M."/>
            <person name="Akiyama K."/>
            <person name="Ansari Y."/>
            <person name="Arakawa T."/>
            <person name="Banh J."/>
            <person name="Banno F."/>
            <person name="Bowser L."/>
            <person name="Brooks S.Y."/>
            <person name="Carninci P."/>
            <person name="Chao Q."/>
            <person name="Choy N."/>
            <person name="Enju A."/>
            <person name="Goldsmith A.D."/>
            <person name="Gurjal M."/>
            <person name="Hansen N.F."/>
            <person name="Hayashizaki Y."/>
            <person name="Johnson-Hopson C."/>
            <person name="Hsuan V.W."/>
            <person name="Iida K."/>
            <person name="Karnes M."/>
            <person name="Khan S."/>
            <person name="Koesema E."/>
            <person name="Ishida J."/>
            <person name="Jiang P.X."/>
            <person name="Jones T."/>
            <person name="Kawai J."/>
            <person name="Kamiya A."/>
            <person name="Meyers C."/>
            <person name="Nakajima M."/>
            <person name="Narusaka M."/>
            <person name="Seki M."/>
            <person name="Sakurai T."/>
            <person name="Satou M."/>
            <person name="Tamse R."/>
            <person name="Vaysberg M."/>
            <person name="Wallender E.K."/>
            <person name="Wong C."/>
            <person name="Yamamura Y."/>
            <person name="Yuan S."/>
            <person name="Shinozaki K."/>
            <person name="Davis R.W."/>
            <person name="Theologis A."/>
            <person name="Ecker J.R."/>
        </authorList>
    </citation>
    <scope>NUCLEOTIDE SEQUENCE [LARGE SCALE MRNA]</scope>
    <source>
        <strain>cv. Columbia</strain>
    </source>
</reference>
<reference key="4">
    <citation type="journal article" date="2007" name="Plant J.">
        <title>The role of methionine recycling for ethylene synthesis in Arabidopsis.</title>
        <authorList>
            <person name="Buerstenbinder K."/>
            <person name="Rzewuski G."/>
            <person name="Wirtz M."/>
            <person name="Hell R."/>
            <person name="Sauter M."/>
        </authorList>
    </citation>
    <scope>FUNCTION</scope>
</reference>
<reference key="5">
    <citation type="journal article" date="2008" name="Plant Physiol.">
        <title>The Arabidopsis calcium sensor calcineurin B-like 3 inhibits the 5'-methylthioadenosine nucleosidase in a calcium-dependent manner.</title>
        <authorList>
            <person name="Oh S.I."/>
            <person name="Park J."/>
            <person name="Yoon S."/>
            <person name="Kim Y."/>
            <person name="Park S."/>
            <person name="Ryu M."/>
            <person name="Nam M.J."/>
            <person name="Ok S.H."/>
            <person name="Kim J.K."/>
            <person name="Shin J.S."/>
            <person name="Kim K.N."/>
        </authorList>
    </citation>
    <scope>ACTIVITY REGULATION</scope>
    <scope>TISSUE SPECIFICITY</scope>
    <scope>INTERACTION WITH CBL3</scope>
</reference>
<reference key="6">
    <citation type="journal article" date="2010" name="Plant J.">
        <title>Inhibition of 5'-methylthioadenosine metabolism in the Yang cycle alters polyamine levels, and impairs seedling growth and reproduction in Arabidopsis.</title>
        <authorList>
            <person name="Buerstenbinder K."/>
            <person name="Waduwara I."/>
            <person name="Schoor S."/>
            <person name="Moffatt B.A."/>
            <person name="Wirtz M."/>
            <person name="Minocha S.C."/>
            <person name="Oppermann Y."/>
            <person name="Bouchereau A."/>
            <person name="Hell R."/>
            <person name="Sauter M."/>
        </authorList>
    </citation>
    <scope>FUNCTION</scope>
    <scope>DISRUPTION PHENOTYPE</scope>
</reference>
<reference key="7">
    <citation type="journal article" date="2009" name="Biochem. Biophys. Res. Commun.">
        <title>Biochemical and structural characterization of 5'-methylthioadenosine nucleosidases from Arabidopsis thaliana.</title>
        <authorList>
            <person name="Park E.Y."/>
            <person name="Choi W.S."/>
            <person name="Oh S.I."/>
            <person name="Kim K.N."/>
            <person name="Shin J.S."/>
            <person name="Song H.K."/>
        </authorList>
    </citation>
    <scope>FUNCTION</scope>
    <scope>CATALYTIC ACTIVITY</scope>
    <scope>BIOPHYSICOCHEMICAL PROPERTIES</scope>
    <scope>SUBSTRATE SPECIFICITY</scope>
    <scope>SUBUNIT</scope>
</reference>
<reference evidence="13" key="8">
    <citation type="journal article" date="2006" name="Proteins">
        <title>Crystal structure of 5'-methylthioadenosine nucleosidase from Arabidopsis thaliana at 1.5-A resolution.</title>
        <authorList>
            <person name="Park E.Y."/>
            <person name="Oh S.I."/>
            <person name="Nam M.J."/>
            <person name="Shin J.S."/>
            <person name="Kim K.N."/>
            <person name="Song H.K."/>
        </authorList>
    </citation>
    <scope>X-RAY CRYSTALLOGRAPHY (1.5 ANGSTROMS) IN COMPLEX WITH ADENINE</scope>
    <scope>SUBUNIT</scope>
</reference>
<reference evidence="14 15 16" key="9">
    <citation type="journal article" date="2008" name="J. Mol. Biol.">
        <title>Molecular determinants of substrate specificity in plant 5'-methylthioadenosine nucleosidases.</title>
        <authorList>
            <person name="Siu K.K."/>
            <person name="Lee J.E."/>
            <person name="Sufrin J.R."/>
            <person name="Moffatt B.A."/>
            <person name="McMillan M."/>
            <person name="Cornell K.A."/>
            <person name="Isom C."/>
            <person name="Howell P.L."/>
        </authorList>
    </citation>
    <scope>X-RAY CRYSTALLOGRAPHY (1.84 ANGSTROMS) OF APOENZYME AND IN COMPLEXES WITH ADENINE AND THE SUBSTRATE- AND TRANSITION-STATE-ANALOGS 5'-METHYLTHIOTUBERCIDIN AND FORMYCIN A</scope>
    <scope>FUNCTION</scope>
    <scope>CATALYTIC ACTIVITY</scope>
    <scope>SUBSTRATE SPECIFICITY</scope>
    <scope>BIOPHYSICOCHEMICAL PROPERTIES</scope>
    <scope>ACTIVITY REGULATION</scope>
    <scope>SUBUNIT</scope>
</reference>
<reference evidence="17" key="10">
    <citation type="journal article" date="2011" name="J. Struct. Biol.">
        <title>Mechanism of substrate specificity in 5'-methylthioadenosine/S-adenosylhomocysteine nucleosidases.</title>
        <authorList>
            <person name="Siu K.K."/>
            <person name="Asmus K."/>
            <person name="Zhang A.N."/>
            <person name="Horvatin C."/>
            <person name="Li S."/>
            <person name="Liu T."/>
            <person name="Moffatt B."/>
            <person name="Woods V.L. Jr."/>
            <person name="Howell P.L."/>
        </authorList>
    </citation>
    <scope>X-RAY CRYSTALLOGRAPHY (2.2 ANGSTROMS) IN COMPLEX WITH S-ADENOSYL-L-HOMOCYSTEINE AND ADENINE</scope>
    <scope>ACTIVE SITE</scope>
</reference>
<evidence type="ECO:0000269" key="1">
    <source>
    </source>
</evidence>
<evidence type="ECO:0000269" key="2">
    <source>
    </source>
</evidence>
<evidence type="ECO:0000269" key="3">
    <source>
    </source>
</evidence>
<evidence type="ECO:0000269" key="4">
    <source>
    </source>
</evidence>
<evidence type="ECO:0000269" key="5">
    <source>
    </source>
</evidence>
<evidence type="ECO:0000269" key="6">
    <source>
    </source>
</evidence>
<evidence type="ECO:0000269" key="7">
    <source>
    </source>
</evidence>
<evidence type="ECO:0000303" key="8">
    <source>
    </source>
</evidence>
<evidence type="ECO:0000305" key="9"/>
<evidence type="ECO:0000305" key="10">
    <source>
    </source>
</evidence>
<evidence type="ECO:0000305" key="11">
    <source>
    </source>
</evidence>
<evidence type="ECO:0000305" key="12">
    <source>
    </source>
</evidence>
<evidence type="ECO:0007744" key="13">
    <source>
        <dbReference type="PDB" id="2H8G"/>
    </source>
</evidence>
<evidence type="ECO:0007744" key="14">
    <source>
        <dbReference type="PDB" id="2QSU"/>
    </source>
</evidence>
<evidence type="ECO:0007744" key="15">
    <source>
        <dbReference type="PDB" id="2QTG"/>
    </source>
</evidence>
<evidence type="ECO:0007744" key="16">
    <source>
        <dbReference type="PDB" id="2QTT"/>
    </source>
</evidence>
<evidence type="ECO:0007744" key="17">
    <source>
        <dbReference type="PDB" id="3LGS"/>
    </source>
</evidence>
<evidence type="ECO:0007829" key="18">
    <source>
        <dbReference type="PDB" id="2H8G"/>
    </source>
</evidence>
<evidence type="ECO:0007829" key="19">
    <source>
        <dbReference type="PDB" id="2QSU"/>
    </source>
</evidence>